<feature type="chain" id="PRO_1000137317" description="Redox-sensing transcriptional repressor Rex">
    <location>
        <begin position="1"/>
        <end position="209"/>
    </location>
</feature>
<feature type="DNA-binding region" description="H-T-H motif" evidence="1">
    <location>
        <begin position="16"/>
        <end position="55"/>
    </location>
</feature>
<feature type="binding site" evidence="1">
    <location>
        <begin position="90"/>
        <end position="95"/>
    </location>
    <ligand>
        <name>NAD(+)</name>
        <dbReference type="ChEBI" id="CHEBI:57540"/>
    </ligand>
</feature>
<gene>
    <name evidence="1" type="primary">rex</name>
    <name type="ordered locus">BCG9842_B5030</name>
</gene>
<reference key="1">
    <citation type="submission" date="2008-10" db="EMBL/GenBank/DDBJ databases">
        <title>Genome sequence of Bacillus cereus G9842.</title>
        <authorList>
            <person name="Dodson R.J."/>
            <person name="Durkin A.S."/>
            <person name="Rosovitz M.J."/>
            <person name="Rasko D.A."/>
            <person name="Hoffmaster A."/>
            <person name="Ravel J."/>
            <person name="Sutton G."/>
        </authorList>
    </citation>
    <scope>NUCLEOTIDE SEQUENCE [LARGE SCALE GENOMIC DNA]</scope>
    <source>
        <strain>G9842</strain>
    </source>
</reference>
<accession>B7IUS6</accession>
<dbReference type="EMBL" id="CP001186">
    <property type="protein sequence ID" value="ACK94573.1"/>
    <property type="molecule type" value="Genomic_DNA"/>
</dbReference>
<dbReference type="RefSeq" id="WP_000372699.1">
    <property type="nucleotide sequence ID" value="NC_011772.1"/>
</dbReference>
<dbReference type="SMR" id="B7IUS6"/>
<dbReference type="KEGG" id="bcg:BCG9842_B5030"/>
<dbReference type="HOGENOM" id="CLU_061534_1_1_9"/>
<dbReference type="Proteomes" id="UP000006744">
    <property type="component" value="Chromosome"/>
</dbReference>
<dbReference type="GO" id="GO:0005737">
    <property type="term" value="C:cytoplasm"/>
    <property type="evidence" value="ECO:0007669"/>
    <property type="project" value="UniProtKB-SubCell"/>
</dbReference>
<dbReference type="GO" id="GO:0003677">
    <property type="term" value="F:DNA binding"/>
    <property type="evidence" value="ECO:0007669"/>
    <property type="project" value="UniProtKB-UniRule"/>
</dbReference>
<dbReference type="GO" id="GO:0003700">
    <property type="term" value="F:DNA-binding transcription factor activity"/>
    <property type="evidence" value="ECO:0007669"/>
    <property type="project" value="UniProtKB-UniRule"/>
</dbReference>
<dbReference type="GO" id="GO:0045892">
    <property type="term" value="P:negative regulation of DNA-templated transcription"/>
    <property type="evidence" value="ECO:0007669"/>
    <property type="project" value="InterPro"/>
</dbReference>
<dbReference type="GO" id="GO:0051775">
    <property type="term" value="P:response to redox state"/>
    <property type="evidence" value="ECO:0007669"/>
    <property type="project" value="InterPro"/>
</dbReference>
<dbReference type="Gene3D" id="3.40.50.720">
    <property type="entry name" value="NAD(P)-binding Rossmann-like Domain"/>
    <property type="match status" value="1"/>
</dbReference>
<dbReference type="Gene3D" id="1.10.10.10">
    <property type="entry name" value="Winged helix-like DNA-binding domain superfamily/Winged helix DNA-binding domain"/>
    <property type="match status" value="1"/>
</dbReference>
<dbReference type="HAMAP" id="MF_01131">
    <property type="entry name" value="Rex"/>
    <property type="match status" value="1"/>
</dbReference>
<dbReference type="InterPro" id="IPR003781">
    <property type="entry name" value="CoA-bd"/>
</dbReference>
<dbReference type="InterPro" id="IPR036291">
    <property type="entry name" value="NAD(P)-bd_dom_sf"/>
</dbReference>
<dbReference type="InterPro" id="IPR009718">
    <property type="entry name" value="Rex_DNA-bd_C_dom"/>
</dbReference>
<dbReference type="InterPro" id="IPR022876">
    <property type="entry name" value="Tscrpt_rep_Rex"/>
</dbReference>
<dbReference type="InterPro" id="IPR036388">
    <property type="entry name" value="WH-like_DNA-bd_sf"/>
</dbReference>
<dbReference type="InterPro" id="IPR036390">
    <property type="entry name" value="WH_DNA-bd_sf"/>
</dbReference>
<dbReference type="NCBIfam" id="NF003989">
    <property type="entry name" value="PRK05472.1-3"/>
    <property type="match status" value="1"/>
</dbReference>
<dbReference type="NCBIfam" id="NF003991">
    <property type="entry name" value="PRK05472.1-5"/>
    <property type="match status" value="1"/>
</dbReference>
<dbReference type="NCBIfam" id="NF003994">
    <property type="entry name" value="PRK05472.2-3"/>
    <property type="match status" value="1"/>
</dbReference>
<dbReference type="NCBIfam" id="NF003995">
    <property type="entry name" value="PRK05472.2-4"/>
    <property type="match status" value="1"/>
</dbReference>
<dbReference type="NCBIfam" id="NF003996">
    <property type="entry name" value="PRK05472.2-5"/>
    <property type="match status" value="1"/>
</dbReference>
<dbReference type="PANTHER" id="PTHR35786">
    <property type="entry name" value="REDOX-SENSING TRANSCRIPTIONAL REPRESSOR REX"/>
    <property type="match status" value="1"/>
</dbReference>
<dbReference type="PANTHER" id="PTHR35786:SF1">
    <property type="entry name" value="REDOX-SENSING TRANSCRIPTIONAL REPRESSOR REX 1"/>
    <property type="match status" value="1"/>
</dbReference>
<dbReference type="Pfam" id="PF02629">
    <property type="entry name" value="CoA_binding"/>
    <property type="match status" value="1"/>
</dbReference>
<dbReference type="Pfam" id="PF06971">
    <property type="entry name" value="Put_DNA-bind_N"/>
    <property type="match status" value="1"/>
</dbReference>
<dbReference type="SMART" id="SM00881">
    <property type="entry name" value="CoA_binding"/>
    <property type="match status" value="1"/>
</dbReference>
<dbReference type="SUPFAM" id="SSF51735">
    <property type="entry name" value="NAD(P)-binding Rossmann-fold domains"/>
    <property type="match status" value="1"/>
</dbReference>
<dbReference type="SUPFAM" id="SSF46785">
    <property type="entry name" value="Winged helix' DNA-binding domain"/>
    <property type="match status" value="1"/>
</dbReference>
<evidence type="ECO:0000255" key="1">
    <source>
        <dbReference type="HAMAP-Rule" id="MF_01131"/>
    </source>
</evidence>
<comment type="function">
    <text evidence="1">Modulates transcription in response to changes in cellular NADH/NAD(+) redox state.</text>
</comment>
<comment type="subunit">
    <text evidence="1">Homodimer.</text>
</comment>
<comment type="subcellular location">
    <subcellularLocation>
        <location evidence="1">Cytoplasm</location>
    </subcellularLocation>
</comment>
<comment type="similarity">
    <text evidence="1">Belongs to the transcriptional regulatory Rex family.</text>
</comment>
<keyword id="KW-0963">Cytoplasm</keyword>
<keyword id="KW-0238">DNA-binding</keyword>
<keyword id="KW-0520">NAD</keyword>
<keyword id="KW-0678">Repressor</keyword>
<keyword id="KW-0804">Transcription</keyword>
<keyword id="KW-0805">Transcription regulation</keyword>
<organism>
    <name type="scientific">Bacillus cereus (strain G9842)</name>
    <dbReference type="NCBI Taxonomy" id="405531"/>
    <lineage>
        <taxon>Bacteria</taxon>
        <taxon>Bacillati</taxon>
        <taxon>Bacillota</taxon>
        <taxon>Bacilli</taxon>
        <taxon>Bacillales</taxon>
        <taxon>Bacillaceae</taxon>
        <taxon>Bacillus</taxon>
        <taxon>Bacillus cereus group</taxon>
    </lineage>
</organism>
<proteinExistence type="inferred from homology"/>
<protein>
    <recommendedName>
        <fullName evidence="1">Redox-sensing transcriptional repressor Rex</fullName>
    </recommendedName>
</protein>
<sequence>MDQQKIPQATAKRLPLYYRFIQNLSLSGKQRVSSAELSEAVKVDSATIRRDFSYFGALGKKGYGYNVNYLLSFFRETLDQDDITRVALIGVGNLGTAFLHYNFTKNNNTKIEMAFDVSEEKVGTEIGGIPVYHLDELEERLSNDIQVAILTVPATVAQAVADRLAETSVHGILNFTPARLNVSENIRIHHIDLAVELQTLVYFLKNYPQ</sequence>
<name>REX_BACC2</name>